<organism>
    <name type="scientific">Aquifex aeolicus (strain VF5)</name>
    <dbReference type="NCBI Taxonomy" id="224324"/>
    <lineage>
        <taxon>Bacteria</taxon>
        <taxon>Pseudomonadati</taxon>
        <taxon>Aquificota</taxon>
        <taxon>Aquificia</taxon>
        <taxon>Aquificales</taxon>
        <taxon>Aquificaceae</taxon>
        <taxon>Aquifex</taxon>
    </lineage>
</organism>
<protein>
    <recommendedName>
        <fullName evidence="1">Ammonium transporter</fullName>
    </recommendedName>
    <alternativeName>
        <fullName evidence="1">Ammonia channel</fullName>
    </alternativeName>
    <alternativeName>
        <fullName evidence="1">Ammonium channel</fullName>
    </alternativeName>
</protein>
<accession>O66515</accession>
<reference key="1">
    <citation type="journal article" date="1998" name="Nature">
        <title>The complete genome of the hyperthermophilic bacterium Aquifex aeolicus.</title>
        <authorList>
            <person name="Deckert G."/>
            <person name="Warren P.V."/>
            <person name="Gaasterland T."/>
            <person name="Young W.G."/>
            <person name="Lenox A.L."/>
            <person name="Graham D.E."/>
            <person name="Overbeek R."/>
            <person name="Snead M.A."/>
            <person name="Keller M."/>
            <person name="Aujay M."/>
            <person name="Huber R."/>
            <person name="Feldman R.A."/>
            <person name="Short J.M."/>
            <person name="Olsen G.J."/>
            <person name="Swanson R.V."/>
        </authorList>
    </citation>
    <scope>NUCLEOTIDE SEQUENCE [LARGE SCALE GENOMIC DNA]</scope>
    <source>
        <strain>VF5</strain>
    </source>
</reference>
<reference key="2">
    <citation type="journal article" date="2004" name="Science">
        <title>Mechanism of ammonia transport by Amt/MEP/Rh: structure of AmtB at 1.35 A.</title>
        <authorList>
            <person name="Khademi S."/>
            <person name="O'Connell J.D. III"/>
            <person name="Remis J."/>
            <person name="Robles-Colmenares Y."/>
            <person name="Miercke L.J."/>
            <person name="Stroud R.M."/>
        </authorList>
    </citation>
    <scope>PROTEIN SEQUENCE OF N-TERMINUS</scope>
    <scope>CRYSTALLIZATION</scope>
</reference>
<dbReference type="EMBL" id="AE000657">
    <property type="protein sequence ID" value="AAC06478.1"/>
    <property type="molecule type" value="Genomic_DNA"/>
</dbReference>
<dbReference type="PIR" id="H70310">
    <property type="entry name" value="H70310"/>
</dbReference>
<dbReference type="RefSeq" id="NP_213075.1">
    <property type="nucleotide sequence ID" value="NC_000918.1"/>
</dbReference>
<dbReference type="RefSeq" id="WP_010880013.1">
    <property type="nucleotide sequence ID" value="NC_000918.1"/>
</dbReference>
<dbReference type="SMR" id="O66515"/>
<dbReference type="FunCoup" id="O66515">
    <property type="interactions" value="203"/>
</dbReference>
<dbReference type="STRING" id="224324.aq_112"/>
<dbReference type="TCDB" id="1.A.11.1.5">
    <property type="family name" value="the ammonium transporter channel (amt) family"/>
</dbReference>
<dbReference type="EnsemblBacteria" id="AAC06478">
    <property type="protein sequence ID" value="AAC06478"/>
    <property type="gene ID" value="aq_112"/>
</dbReference>
<dbReference type="KEGG" id="aae:aq_112"/>
<dbReference type="PATRIC" id="fig|224324.8.peg.96"/>
<dbReference type="eggNOG" id="COG0004">
    <property type="taxonomic scope" value="Bacteria"/>
</dbReference>
<dbReference type="HOGENOM" id="CLU_000445_33_0_0"/>
<dbReference type="InParanoid" id="O66515"/>
<dbReference type="OrthoDB" id="9814202at2"/>
<dbReference type="Proteomes" id="UP000000798">
    <property type="component" value="Chromosome"/>
</dbReference>
<dbReference type="GO" id="GO:0005886">
    <property type="term" value="C:plasma membrane"/>
    <property type="evidence" value="ECO:0000318"/>
    <property type="project" value="GO_Central"/>
</dbReference>
<dbReference type="GO" id="GO:0008519">
    <property type="term" value="F:ammonium channel activity"/>
    <property type="evidence" value="ECO:0000318"/>
    <property type="project" value="GO_Central"/>
</dbReference>
<dbReference type="GO" id="GO:0072488">
    <property type="term" value="P:ammonium transmembrane transport"/>
    <property type="evidence" value="ECO:0000318"/>
    <property type="project" value="GO_Central"/>
</dbReference>
<dbReference type="Gene3D" id="1.10.3430.10">
    <property type="entry name" value="Ammonium transporter AmtB like domains"/>
    <property type="match status" value="1"/>
</dbReference>
<dbReference type="InterPro" id="IPR029020">
    <property type="entry name" value="Ammonium/urea_transptr"/>
</dbReference>
<dbReference type="InterPro" id="IPR001905">
    <property type="entry name" value="Ammonium_transpt"/>
</dbReference>
<dbReference type="InterPro" id="IPR018047">
    <property type="entry name" value="Ammonium_transpt_CS"/>
</dbReference>
<dbReference type="InterPro" id="IPR024041">
    <property type="entry name" value="NH4_transpt_AmtB-like_dom"/>
</dbReference>
<dbReference type="NCBIfam" id="TIGR00836">
    <property type="entry name" value="amt"/>
    <property type="match status" value="1"/>
</dbReference>
<dbReference type="PANTHER" id="PTHR43029">
    <property type="entry name" value="AMMONIUM TRANSPORTER MEP2"/>
    <property type="match status" value="1"/>
</dbReference>
<dbReference type="PANTHER" id="PTHR43029:SF10">
    <property type="entry name" value="AMMONIUM TRANSPORTER MEP2"/>
    <property type="match status" value="1"/>
</dbReference>
<dbReference type="Pfam" id="PF00909">
    <property type="entry name" value="Ammonium_transp"/>
    <property type="match status" value="1"/>
</dbReference>
<dbReference type="SUPFAM" id="SSF111352">
    <property type="entry name" value="Ammonium transporter"/>
    <property type="match status" value="1"/>
</dbReference>
<dbReference type="PROSITE" id="PS01219">
    <property type="entry name" value="AMMONIUM_TRANSP"/>
    <property type="match status" value="1"/>
</dbReference>
<sequence>MRALGFIGIILSIFSSFAYASEAKLDTGNTAWMLVASALVVFMTVPGLALFYGGLDKSKSILNTIAMSFSAFAVVTLTWIFVGYSVAYGDDIFGFIGNPFQYVLGKGISGINSDTGYPALLDLMFQLTFATITTALISGSFVGRMKFSAWILFAILWSVFVYPPVAHWVWGGGFLANDGALDFAGGTVVHINAGIAGLVGALILGRRKDTSLIPNNVPLVALGAGILWFGWFGFNAGSALGANESAAWAMINTTVATSTAALAWMFTEWLHVGKPTVVGISSGIVAGLVAITPAAGFVNLIGSIFIGAIASVCAYFMVALVKPKFGYDDALDVFGIHGVRGIVGAVLTGVFADPNVGGTPGLLYGNPKQVLIQIEGVIATILYSAILTAVILLVLKAVVGLRVSEEEELELDSSLHGEKAYNL</sequence>
<feature type="signal peptide" evidence="3">
    <location>
        <begin position="1"/>
        <end position="20"/>
    </location>
</feature>
<feature type="chain" id="PRO_0000001306" description="Ammonium transporter">
    <location>
        <begin position="21"/>
        <end position="423"/>
    </location>
</feature>
<feature type="transmembrane region" description="Helical" evidence="2">
    <location>
        <begin position="31"/>
        <end position="51"/>
    </location>
</feature>
<feature type="transmembrane region" description="Helical" evidence="2">
    <location>
        <begin position="64"/>
        <end position="84"/>
    </location>
</feature>
<feature type="transmembrane region" description="Helical" evidence="2">
    <location>
        <begin position="123"/>
        <end position="143"/>
    </location>
</feature>
<feature type="transmembrane region" description="Helical" evidence="2">
    <location>
        <begin position="150"/>
        <end position="170"/>
    </location>
</feature>
<feature type="transmembrane region" description="Helical" evidence="2">
    <location>
        <begin position="183"/>
        <end position="203"/>
    </location>
</feature>
<feature type="transmembrane region" description="Helical" evidence="2">
    <location>
        <begin position="217"/>
        <end position="237"/>
    </location>
</feature>
<feature type="transmembrane region" description="Helical" evidence="2">
    <location>
        <begin position="246"/>
        <end position="266"/>
    </location>
</feature>
<feature type="transmembrane region" description="Helical" evidence="2">
    <location>
        <begin position="278"/>
        <end position="298"/>
    </location>
</feature>
<feature type="transmembrane region" description="Helical" evidence="2">
    <location>
        <begin position="301"/>
        <end position="321"/>
    </location>
</feature>
<feature type="transmembrane region" description="Helical" evidence="2">
    <location>
        <begin position="331"/>
        <end position="351"/>
    </location>
</feature>
<feature type="transmembrane region" description="Helical" evidence="2">
    <location>
        <begin position="374"/>
        <end position="394"/>
    </location>
</feature>
<gene>
    <name type="primary">amt</name>
    <name type="synonym">amtB</name>
    <name type="ordered locus">aq_112</name>
</gene>
<keyword id="KW-0924">Ammonia transport</keyword>
<keyword id="KW-1003">Cell membrane</keyword>
<keyword id="KW-0903">Direct protein sequencing</keyword>
<keyword id="KW-0472">Membrane</keyword>
<keyword id="KW-1185">Reference proteome</keyword>
<keyword id="KW-0732">Signal</keyword>
<keyword id="KW-0812">Transmembrane</keyword>
<keyword id="KW-1133">Transmembrane helix</keyword>
<keyword id="KW-0813">Transport</keyword>
<evidence type="ECO:0000250" key="1">
    <source>
        <dbReference type="UniProtKB" id="P69681"/>
    </source>
</evidence>
<evidence type="ECO:0000255" key="2"/>
<evidence type="ECO:0000269" key="3">
    <source>
    </source>
</evidence>
<evidence type="ECO:0000305" key="4"/>
<comment type="function">
    <text evidence="1">Involved in the uptake of ammonium/ammonia (NH(4)(+)/NH(3)).</text>
</comment>
<comment type="subunit">
    <text evidence="1">Homotrimer.</text>
</comment>
<comment type="subcellular location">
    <subcellularLocation>
        <location>Cell membrane</location>
        <topology>Multi-pass membrane protein</topology>
    </subcellularLocation>
</comment>
<comment type="similarity">
    <text evidence="4">Belongs to the ammonia transporter channel (TC 1.A.11.2) family.</text>
</comment>
<name>AMT_AQUAE</name>
<proteinExistence type="evidence at protein level"/>